<name>KEFG_ECOLI</name>
<evidence type="ECO:0000255" key="1">
    <source>
        <dbReference type="HAMAP-Rule" id="MF_01415"/>
    </source>
</evidence>
<evidence type="ECO:0000269" key="2">
    <source>
    </source>
</evidence>
<comment type="function">
    <text evidence="1 2">Regulatory subunit of a potassium efflux system that confers protection against electrophiles. Required for full activity of KefB.</text>
</comment>
<comment type="catalytic activity">
    <reaction evidence="1">
        <text>a quinone + NADH + H(+) = a quinol + NAD(+)</text>
        <dbReference type="Rhea" id="RHEA:46160"/>
        <dbReference type="ChEBI" id="CHEBI:15378"/>
        <dbReference type="ChEBI" id="CHEBI:24646"/>
        <dbReference type="ChEBI" id="CHEBI:57540"/>
        <dbReference type="ChEBI" id="CHEBI:57945"/>
        <dbReference type="ChEBI" id="CHEBI:132124"/>
        <dbReference type="EC" id="1.6.5.2"/>
    </reaction>
</comment>
<comment type="catalytic activity">
    <reaction evidence="1">
        <text>a quinone + NADPH + H(+) = a quinol + NADP(+)</text>
        <dbReference type="Rhea" id="RHEA:46164"/>
        <dbReference type="ChEBI" id="CHEBI:15378"/>
        <dbReference type="ChEBI" id="CHEBI:24646"/>
        <dbReference type="ChEBI" id="CHEBI:57783"/>
        <dbReference type="ChEBI" id="CHEBI:58349"/>
        <dbReference type="ChEBI" id="CHEBI:132124"/>
        <dbReference type="EC" id="1.6.5.2"/>
    </reaction>
</comment>
<comment type="subunit">
    <text evidence="1">Interacts with KefB.</text>
</comment>
<comment type="subcellular location">
    <subcellularLocation>
        <location evidence="1">Cell inner membrane</location>
        <topology evidence="1">Peripheral membrane protein</topology>
        <orientation evidence="1">Cytoplasmic side</orientation>
    </subcellularLocation>
</comment>
<comment type="similarity">
    <text evidence="1">Belongs to the NAD(P)H dehydrogenase (quinone) family. KefG subfamily.</text>
</comment>
<reference key="1">
    <citation type="journal article" date="1997" name="Science">
        <title>The complete genome sequence of Escherichia coli K-12.</title>
        <authorList>
            <person name="Blattner F.R."/>
            <person name="Plunkett G. III"/>
            <person name="Bloch C.A."/>
            <person name="Perna N.T."/>
            <person name="Burland V."/>
            <person name="Riley M."/>
            <person name="Collado-Vides J."/>
            <person name="Glasner J.D."/>
            <person name="Rode C.K."/>
            <person name="Mayhew G.F."/>
            <person name="Gregor J."/>
            <person name="Davis N.W."/>
            <person name="Kirkpatrick H.A."/>
            <person name="Goeden M.A."/>
            <person name="Rose D.J."/>
            <person name="Mau B."/>
            <person name="Shao Y."/>
        </authorList>
    </citation>
    <scope>NUCLEOTIDE SEQUENCE [LARGE SCALE GENOMIC DNA]</scope>
    <source>
        <strain>K12 / MG1655 / ATCC 47076</strain>
    </source>
</reference>
<reference key="2">
    <citation type="journal article" date="2006" name="Mol. Syst. Biol.">
        <title>Highly accurate genome sequences of Escherichia coli K-12 strains MG1655 and W3110.</title>
        <authorList>
            <person name="Hayashi K."/>
            <person name="Morooka N."/>
            <person name="Yamamoto Y."/>
            <person name="Fujita K."/>
            <person name="Isono K."/>
            <person name="Choi S."/>
            <person name="Ohtsubo E."/>
            <person name="Baba T."/>
            <person name="Wanner B.L."/>
            <person name="Mori H."/>
            <person name="Horiuchi T."/>
        </authorList>
    </citation>
    <scope>NUCLEOTIDE SEQUENCE [LARGE SCALE GENOMIC DNA]</scope>
    <source>
        <strain>K12 / W3110 / ATCC 27325 / DSM 5911</strain>
    </source>
</reference>
<reference key="3">
    <citation type="journal article" date="2000" name="J. Bacteriol.">
        <title>Identification of an ancillary protein, YabF, required for activity of the KefC glutathione-gated potassium efflux system in Escherichia coli.</title>
        <authorList>
            <person name="Miller S."/>
            <person name="Ness L.S."/>
            <person name="Wood C.M."/>
            <person name="Fox B.C."/>
            <person name="Booth I.R."/>
        </authorList>
    </citation>
    <scope>FUNCTION</scope>
    <source>
        <strain>Frag5</strain>
    </source>
</reference>
<proteinExistence type="inferred from homology"/>
<keyword id="KW-0997">Cell inner membrane</keyword>
<keyword id="KW-1003">Cell membrane</keyword>
<keyword id="KW-0472">Membrane</keyword>
<keyword id="KW-0520">NAD</keyword>
<keyword id="KW-0560">Oxidoreductase</keyword>
<keyword id="KW-1185">Reference proteome</keyword>
<organism>
    <name type="scientific">Escherichia coli (strain K12)</name>
    <dbReference type="NCBI Taxonomy" id="83333"/>
    <lineage>
        <taxon>Bacteria</taxon>
        <taxon>Pseudomonadati</taxon>
        <taxon>Pseudomonadota</taxon>
        <taxon>Gammaproteobacteria</taxon>
        <taxon>Enterobacterales</taxon>
        <taxon>Enterobacteriaceae</taxon>
        <taxon>Escherichia</taxon>
    </lineage>
</organism>
<gene>
    <name evidence="1" type="primary">kefG</name>
    <name type="synonym">yheR</name>
    <name type="ordered locus">b3351</name>
    <name type="ordered locus">JW3314</name>
</gene>
<sequence length="184" mass="20958">MMSQPAKVLLLYAHPESQDSVANRVLLKPATQLSNVTVHDLYAHYPDFFIDIPREQALLREHEVIVFQHPLYTYSCPALLKEWLDRVLSRGFASGPGGNQLAGKYWRSVITTGEPESAYRYDALNRYPMSDVLRPFELAAGMCRMHWLSPIIIYWARRQSAQELASHARAYGDWLANPLSPGGR</sequence>
<dbReference type="EC" id="1.6.5.2" evidence="1"/>
<dbReference type="EMBL" id="U18997">
    <property type="protein sequence ID" value="AAA58148.1"/>
    <property type="molecule type" value="Genomic_DNA"/>
</dbReference>
<dbReference type="EMBL" id="U00096">
    <property type="protein sequence ID" value="AAC76376.1"/>
    <property type="molecule type" value="Genomic_DNA"/>
</dbReference>
<dbReference type="EMBL" id="AP009048">
    <property type="protein sequence ID" value="BAE77939.1"/>
    <property type="molecule type" value="Genomic_DNA"/>
</dbReference>
<dbReference type="PIR" id="B65129">
    <property type="entry name" value="B65129"/>
</dbReference>
<dbReference type="RefSeq" id="NP_417810.1">
    <property type="nucleotide sequence ID" value="NC_000913.3"/>
</dbReference>
<dbReference type="SMR" id="P0A756"/>
<dbReference type="BioGRID" id="4263025">
    <property type="interactions" value="18"/>
</dbReference>
<dbReference type="BioGRID" id="852168">
    <property type="interactions" value="1"/>
</dbReference>
<dbReference type="ComplexPortal" id="CPX-3090">
    <property type="entry name" value="Glutathione-regulated potassium-efflux system KefB-KefG complex"/>
</dbReference>
<dbReference type="FunCoup" id="P0A756">
    <property type="interactions" value="12"/>
</dbReference>
<dbReference type="IntAct" id="P0A756">
    <property type="interactions" value="6"/>
</dbReference>
<dbReference type="STRING" id="511145.b3351"/>
<dbReference type="TCDB" id="2.A.37.1.2">
    <property type="family name" value="the monovalent cation:proton antiporter-2 (cpa2) family"/>
</dbReference>
<dbReference type="jPOST" id="P0A756"/>
<dbReference type="PaxDb" id="511145-b3351"/>
<dbReference type="EnsemblBacteria" id="AAC76376">
    <property type="protein sequence ID" value="AAC76376"/>
    <property type="gene ID" value="b3351"/>
</dbReference>
<dbReference type="GeneID" id="947857"/>
<dbReference type="KEGG" id="ecj:JW3314"/>
<dbReference type="KEGG" id="eco:b3351"/>
<dbReference type="PATRIC" id="fig|511145.12.peg.3445"/>
<dbReference type="EchoBASE" id="EB2739"/>
<dbReference type="eggNOG" id="COG2249">
    <property type="taxonomic scope" value="Bacteria"/>
</dbReference>
<dbReference type="HOGENOM" id="CLU_058643_0_1_6"/>
<dbReference type="InParanoid" id="P0A756"/>
<dbReference type="OMA" id="RYPMSDI"/>
<dbReference type="PhylomeDB" id="P0A756"/>
<dbReference type="BioCyc" id="EcoCyc:G7717-MONOMER"/>
<dbReference type="PRO" id="PR:P0A756"/>
<dbReference type="Proteomes" id="UP000000625">
    <property type="component" value="Chromosome"/>
</dbReference>
<dbReference type="GO" id="GO:0005886">
    <property type="term" value="C:plasma membrane"/>
    <property type="evidence" value="ECO:0007669"/>
    <property type="project" value="UniProtKB-SubCell"/>
</dbReference>
<dbReference type="GO" id="GO:1903103">
    <property type="term" value="C:potassium:proton antiporter complex"/>
    <property type="evidence" value="ECO:0000303"/>
    <property type="project" value="ComplexPortal"/>
</dbReference>
<dbReference type="GO" id="GO:0009055">
    <property type="term" value="F:electron transfer activity"/>
    <property type="evidence" value="ECO:0000318"/>
    <property type="project" value="GO_Central"/>
</dbReference>
<dbReference type="GO" id="GO:0010181">
    <property type="term" value="F:FMN binding"/>
    <property type="evidence" value="ECO:0000318"/>
    <property type="project" value="GO_Central"/>
</dbReference>
<dbReference type="GO" id="GO:0003955">
    <property type="term" value="F:NAD(P)H dehydrogenase (quinone) activity"/>
    <property type="evidence" value="ECO:0000318"/>
    <property type="project" value="GO_Central"/>
</dbReference>
<dbReference type="GO" id="GO:0050136">
    <property type="term" value="F:NADH:ubiquinone reductase (non-electrogenic) activity"/>
    <property type="evidence" value="ECO:0007669"/>
    <property type="project" value="RHEA"/>
</dbReference>
<dbReference type="GO" id="GO:0008753">
    <property type="term" value="F:NADPH dehydrogenase (quinone) activity"/>
    <property type="evidence" value="ECO:0007669"/>
    <property type="project" value="RHEA"/>
</dbReference>
<dbReference type="GO" id="GO:1901381">
    <property type="term" value="P:positive regulation of potassium ion transmembrane transport"/>
    <property type="evidence" value="ECO:0000315"/>
    <property type="project" value="EcoCyc"/>
</dbReference>
<dbReference type="GO" id="GO:0006813">
    <property type="term" value="P:potassium ion transport"/>
    <property type="evidence" value="ECO:0007669"/>
    <property type="project" value="InterPro"/>
</dbReference>
<dbReference type="GO" id="GO:0051453">
    <property type="term" value="P:regulation of intracellular pH"/>
    <property type="evidence" value="ECO:0000303"/>
    <property type="project" value="ComplexPortal"/>
</dbReference>
<dbReference type="FunFam" id="3.40.50.360:FF:000013">
    <property type="entry name" value="Glutathione-regulated potassium-efflux system ancillary protein KefG"/>
    <property type="match status" value="1"/>
</dbReference>
<dbReference type="Gene3D" id="3.40.50.360">
    <property type="match status" value="1"/>
</dbReference>
<dbReference type="HAMAP" id="MF_01415">
    <property type="entry name" value="K_H_efflux_KefG"/>
    <property type="match status" value="1"/>
</dbReference>
<dbReference type="InterPro" id="IPR003680">
    <property type="entry name" value="Flavodoxin_fold"/>
</dbReference>
<dbReference type="InterPro" id="IPR029039">
    <property type="entry name" value="Flavoprotein-like_sf"/>
</dbReference>
<dbReference type="InterPro" id="IPR023947">
    <property type="entry name" value="K_H_efflux_KefG"/>
</dbReference>
<dbReference type="InterPro" id="IPR046980">
    <property type="entry name" value="KefG/KefF"/>
</dbReference>
<dbReference type="NCBIfam" id="NF003430">
    <property type="entry name" value="PRK04930.1"/>
    <property type="match status" value="1"/>
</dbReference>
<dbReference type="PANTHER" id="PTHR47307">
    <property type="entry name" value="GLUTATHIONE-REGULATED POTASSIUM-EFFLUX SYSTEM ANCILLARY PROTEIN KEFG"/>
    <property type="match status" value="1"/>
</dbReference>
<dbReference type="PANTHER" id="PTHR47307:SF1">
    <property type="entry name" value="GLUTATHIONE-REGULATED POTASSIUM-EFFLUX SYSTEM ANCILLARY PROTEIN KEFG"/>
    <property type="match status" value="1"/>
</dbReference>
<dbReference type="Pfam" id="PF02525">
    <property type="entry name" value="Flavodoxin_2"/>
    <property type="match status" value="1"/>
</dbReference>
<dbReference type="SUPFAM" id="SSF52218">
    <property type="entry name" value="Flavoproteins"/>
    <property type="match status" value="1"/>
</dbReference>
<protein>
    <recommendedName>
        <fullName evidence="1">Glutathione-regulated potassium-efflux system ancillary protein KefG</fullName>
    </recommendedName>
    <alternativeName>
        <fullName evidence="1">Putative quinone oxidoreductase KefG</fullName>
        <ecNumber evidence="1">1.6.5.2</ecNumber>
    </alternativeName>
</protein>
<feature type="chain" id="PRO_0000071642" description="Glutathione-regulated potassium-efflux system ancillary protein KefG">
    <location>
        <begin position="1"/>
        <end position="184"/>
    </location>
</feature>
<accession>P0A756</accession>
<accession>P45534</accession>
<accession>Q2M717</accession>